<sequence>MTNYGAIPTSSHASPLVDVESLSRAKHRIKAGLATRRAWRVMFDFHSMGLPHGVSDAFTRIKTNLAYFRMNYAIVVLIVIFFSLIWHPTSLIVFTVLVVVWIFLYFLRDEPIKLFRFQIDDRTVLIVLSVLTVVLLLLTNATFNIVGALVTGAVLVLIHSVVRKTEDLFLDEEAATTETSGLTSYPST</sequence>
<accession>Q9LIC6</accession>
<accession>Q8L959</accession>
<feature type="chain" id="PRO_0000352261" description="PRA1 family protein F3">
    <location>
        <begin position="1"/>
        <end position="188"/>
    </location>
</feature>
<feature type="transmembrane region" description="Helical" evidence="2">
    <location>
        <begin position="74"/>
        <end position="94"/>
    </location>
</feature>
<feature type="transmembrane region" description="Helical" evidence="2">
    <location>
        <begin position="95"/>
        <end position="115"/>
    </location>
</feature>
<feature type="transmembrane region" description="Helical" evidence="2">
    <location>
        <begin position="123"/>
        <end position="143"/>
    </location>
</feature>
<feature type="transmembrane region" description="Helical" evidence="2">
    <location>
        <begin position="145"/>
        <end position="165"/>
    </location>
</feature>
<feature type="sequence conflict" description="In Ref. 4; AAM66945." evidence="7" ref="4">
    <original>S</original>
    <variation>A</variation>
    <location>
        <position position="160"/>
    </location>
</feature>
<name>PR1F3_ARATH</name>
<keyword id="KW-0963">Cytoplasm</keyword>
<keyword id="KW-0256">Endoplasmic reticulum</keyword>
<keyword id="KW-0472">Membrane</keyword>
<keyword id="KW-1185">Reference proteome</keyword>
<keyword id="KW-0812">Transmembrane</keyword>
<keyword id="KW-1133">Transmembrane helix</keyword>
<keyword id="KW-0813">Transport</keyword>
<protein>
    <recommendedName>
        <fullName evidence="5">PRA1 family protein F3</fullName>
        <shortName evidence="5">AtPRA1.F3</shortName>
    </recommendedName>
    <alternativeName>
        <fullName evidence="6">Prenylated Rab acceptor 8</fullName>
    </alternativeName>
</protein>
<comment type="function">
    <text evidence="1">May be involved in both secretory and endocytic intracellular trafficking in the endosomal/prevacuolar compartments.</text>
</comment>
<comment type="subunit">
    <text evidence="3 4">Interacts with PRA1F2 and PRA1D (PubMed:18583532). Interacts with ACD11 and BPA1 (PubMed:18845362).</text>
</comment>
<comment type="interaction">
    <interactant intactId="EBI-2010961">
        <id>Q9LIC6</id>
    </interactant>
    <interactant intactId="EBI-21138098">
        <id>Q9M354</id>
        <label>AGD6</label>
    </interactant>
    <organismsDiffer>false</organismsDiffer>
    <experiments>3</experiments>
</comment>
<comment type="subcellular location">
    <subcellularLocation>
        <location evidence="8">Endoplasmic reticulum membrane</location>
        <topology evidence="8">Multi-pass membrane protein</topology>
    </subcellularLocation>
    <subcellularLocation>
        <location evidence="4">Membrane</location>
        <topology evidence="2">Multi-pass membrane protein</topology>
    </subcellularLocation>
    <subcellularLocation>
        <location evidence="4">Cytoplasm</location>
    </subcellularLocation>
</comment>
<comment type="tissue specificity">
    <text evidence="3">Expressed in lateral roots, lateral root caps and columella cells.</text>
</comment>
<comment type="disruption phenotype">
    <text evidence="9">No visible phenotype.</text>
</comment>
<comment type="similarity">
    <text evidence="7">Belongs to the PRA1 family.</text>
</comment>
<organism>
    <name type="scientific">Arabidopsis thaliana</name>
    <name type="common">Mouse-ear cress</name>
    <dbReference type="NCBI Taxonomy" id="3702"/>
    <lineage>
        <taxon>Eukaryota</taxon>
        <taxon>Viridiplantae</taxon>
        <taxon>Streptophyta</taxon>
        <taxon>Embryophyta</taxon>
        <taxon>Tracheophyta</taxon>
        <taxon>Spermatophyta</taxon>
        <taxon>Magnoliopsida</taxon>
        <taxon>eudicotyledons</taxon>
        <taxon>Gunneridae</taxon>
        <taxon>Pentapetalae</taxon>
        <taxon>rosids</taxon>
        <taxon>malvids</taxon>
        <taxon>Brassicales</taxon>
        <taxon>Brassicaceae</taxon>
        <taxon>Camelineae</taxon>
        <taxon>Arabidopsis</taxon>
    </lineage>
</organism>
<dbReference type="EMBL" id="AP001307">
    <property type="protein sequence ID" value="BAB01921.1"/>
    <property type="molecule type" value="Genomic_DNA"/>
</dbReference>
<dbReference type="EMBL" id="CP002686">
    <property type="protein sequence ID" value="AEE75403.1"/>
    <property type="molecule type" value="Genomic_DNA"/>
</dbReference>
<dbReference type="EMBL" id="BT004174">
    <property type="protein sequence ID" value="AAO42194.1"/>
    <property type="molecule type" value="mRNA"/>
</dbReference>
<dbReference type="EMBL" id="BT004952">
    <property type="protein sequence ID" value="AAO50485.1"/>
    <property type="molecule type" value="mRNA"/>
</dbReference>
<dbReference type="EMBL" id="AY088623">
    <property type="protein sequence ID" value="AAM66945.1"/>
    <property type="molecule type" value="mRNA"/>
</dbReference>
<dbReference type="RefSeq" id="NP_566461.1">
    <property type="nucleotide sequence ID" value="NM_112222.4"/>
</dbReference>
<dbReference type="SMR" id="Q9LIC6"/>
<dbReference type="BioGRID" id="5915">
    <property type="interactions" value="49"/>
</dbReference>
<dbReference type="FunCoup" id="Q9LIC6">
    <property type="interactions" value="1711"/>
</dbReference>
<dbReference type="IntAct" id="Q9LIC6">
    <property type="interactions" value="42"/>
</dbReference>
<dbReference type="STRING" id="3702.Q9LIC6"/>
<dbReference type="iPTMnet" id="Q9LIC6"/>
<dbReference type="PaxDb" id="3702-AT3G13720.1"/>
<dbReference type="ProteomicsDB" id="225981"/>
<dbReference type="EnsemblPlants" id="AT3G13720.1">
    <property type="protein sequence ID" value="AT3G13720.1"/>
    <property type="gene ID" value="AT3G13720"/>
</dbReference>
<dbReference type="GeneID" id="820581"/>
<dbReference type="Gramene" id="AT3G13720.1">
    <property type="protein sequence ID" value="AT3G13720.1"/>
    <property type="gene ID" value="AT3G13720"/>
</dbReference>
<dbReference type="KEGG" id="ath:AT3G13720"/>
<dbReference type="Araport" id="AT3G13720"/>
<dbReference type="TAIR" id="AT3G13720">
    <property type="gene designation" value="PRA8"/>
</dbReference>
<dbReference type="eggNOG" id="KOG3142">
    <property type="taxonomic scope" value="Eukaryota"/>
</dbReference>
<dbReference type="HOGENOM" id="CLU_060198_2_1_1"/>
<dbReference type="InParanoid" id="Q9LIC6"/>
<dbReference type="OMA" id="FHQIEPA"/>
<dbReference type="PhylomeDB" id="Q9LIC6"/>
<dbReference type="PRO" id="PR:Q9LIC6"/>
<dbReference type="Proteomes" id="UP000006548">
    <property type="component" value="Chromosome 3"/>
</dbReference>
<dbReference type="ExpressionAtlas" id="Q9LIC6">
    <property type="expression patterns" value="baseline and differential"/>
</dbReference>
<dbReference type="GO" id="GO:0005783">
    <property type="term" value="C:endoplasmic reticulum"/>
    <property type="evidence" value="ECO:0000314"/>
    <property type="project" value="TAIR"/>
</dbReference>
<dbReference type="GO" id="GO:0005789">
    <property type="term" value="C:endoplasmic reticulum membrane"/>
    <property type="evidence" value="ECO:0007669"/>
    <property type="project" value="UniProtKB-SubCell"/>
</dbReference>
<dbReference type="GO" id="GO:0016192">
    <property type="term" value="P:vesicle-mediated transport"/>
    <property type="evidence" value="ECO:0000314"/>
    <property type="project" value="TAIR"/>
</dbReference>
<dbReference type="InterPro" id="IPR004895">
    <property type="entry name" value="Prenylated_rab_accept_PRA1"/>
</dbReference>
<dbReference type="PANTHER" id="PTHR19317:SF61">
    <property type="entry name" value="PRA1 FAMILY PROTEIN F3-RELATED"/>
    <property type="match status" value="1"/>
</dbReference>
<dbReference type="PANTHER" id="PTHR19317">
    <property type="entry name" value="PRENYLATED RAB ACCEPTOR 1-RELATED"/>
    <property type="match status" value="1"/>
</dbReference>
<dbReference type="Pfam" id="PF03208">
    <property type="entry name" value="PRA1"/>
    <property type="match status" value="1"/>
</dbReference>
<reference key="1">
    <citation type="journal article" date="2000" name="DNA Res.">
        <title>Structural analysis of Arabidopsis thaliana chromosome 3. II. Sequence features of the 4,251,695 bp regions covered by 90 P1, TAC and BAC clones.</title>
        <authorList>
            <person name="Kaneko T."/>
            <person name="Katoh T."/>
            <person name="Sato S."/>
            <person name="Nakamura Y."/>
            <person name="Asamizu E."/>
            <person name="Tabata S."/>
        </authorList>
    </citation>
    <scope>NUCLEOTIDE SEQUENCE [LARGE SCALE GENOMIC DNA]</scope>
    <source>
        <strain>cv. Columbia</strain>
    </source>
</reference>
<reference key="2">
    <citation type="journal article" date="2017" name="Plant J.">
        <title>Araport11: a complete reannotation of the Arabidopsis thaliana reference genome.</title>
        <authorList>
            <person name="Cheng C.Y."/>
            <person name="Krishnakumar V."/>
            <person name="Chan A.P."/>
            <person name="Thibaud-Nissen F."/>
            <person name="Schobel S."/>
            <person name="Town C.D."/>
        </authorList>
    </citation>
    <scope>GENOME REANNOTATION</scope>
    <source>
        <strain>cv. Columbia</strain>
    </source>
</reference>
<reference key="3">
    <citation type="journal article" date="2003" name="Science">
        <title>Empirical analysis of transcriptional activity in the Arabidopsis genome.</title>
        <authorList>
            <person name="Yamada K."/>
            <person name="Lim J."/>
            <person name="Dale J.M."/>
            <person name="Chen H."/>
            <person name="Shinn P."/>
            <person name="Palm C.J."/>
            <person name="Southwick A.M."/>
            <person name="Wu H.C."/>
            <person name="Kim C.J."/>
            <person name="Nguyen M."/>
            <person name="Pham P.K."/>
            <person name="Cheuk R.F."/>
            <person name="Karlin-Newmann G."/>
            <person name="Liu S.X."/>
            <person name="Lam B."/>
            <person name="Sakano H."/>
            <person name="Wu T."/>
            <person name="Yu G."/>
            <person name="Miranda M."/>
            <person name="Quach H.L."/>
            <person name="Tripp M."/>
            <person name="Chang C.H."/>
            <person name="Lee J.M."/>
            <person name="Toriumi M.J."/>
            <person name="Chan M.M."/>
            <person name="Tang C.C."/>
            <person name="Onodera C.S."/>
            <person name="Deng J.M."/>
            <person name="Akiyama K."/>
            <person name="Ansari Y."/>
            <person name="Arakawa T."/>
            <person name="Banh J."/>
            <person name="Banno F."/>
            <person name="Bowser L."/>
            <person name="Brooks S.Y."/>
            <person name="Carninci P."/>
            <person name="Chao Q."/>
            <person name="Choy N."/>
            <person name="Enju A."/>
            <person name="Goldsmith A.D."/>
            <person name="Gurjal M."/>
            <person name="Hansen N.F."/>
            <person name="Hayashizaki Y."/>
            <person name="Johnson-Hopson C."/>
            <person name="Hsuan V.W."/>
            <person name="Iida K."/>
            <person name="Karnes M."/>
            <person name="Khan S."/>
            <person name="Koesema E."/>
            <person name="Ishida J."/>
            <person name="Jiang P.X."/>
            <person name="Jones T."/>
            <person name="Kawai J."/>
            <person name="Kamiya A."/>
            <person name="Meyers C."/>
            <person name="Nakajima M."/>
            <person name="Narusaka M."/>
            <person name="Seki M."/>
            <person name="Sakurai T."/>
            <person name="Satou M."/>
            <person name="Tamse R."/>
            <person name="Vaysberg M."/>
            <person name="Wallender E.K."/>
            <person name="Wong C."/>
            <person name="Yamamura Y."/>
            <person name="Yuan S."/>
            <person name="Shinozaki K."/>
            <person name="Davis R.W."/>
            <person name="Theologis A."/>
            <person name="Ecker J.R."/>
        </authorList>
    </citation>
    <scope>NUCLEOTIDE SEQUENCE [LARGE SCALE MRNA]</scope>
    <source>
        <strain>cv. Columbia</strain>
    </source>
</reference>
<reference key="4">
    <citation type="submission" date="2002-03" db="EMBL/GenBank/DDBJ databases">
        <title>Full-length cDNA from Arabidopsis thaliana.</title>
        <authorList>
            <person name="Brover V.V."/>
            <person name="Troukhan M.E."/>
            <person name="Alexandrov N.A."/>
            <person name="Lu Y.-P."/>
            <person name="Flavell R.B."/>
            <person name="Feldmann K.A."/>
        </authorList>
    </citation>
    <scope>NUCLEOTIDE SEQUENCE [LARGE SCALE MRNA]</scope>
</reference>
<reference key="5">
    <citation type="journal article" date="2008" name="Plant Physiol.">
        <title>The PRA1 gene family in Arabidopsis.</title>
        <authorList>
            <person name="Alvim Kamei C.L."/>
            <person name="Boruc J."/>
            <person name="Vandepoele K."/>
            <person name="Van den Daele H."/>
            <person name="Maes S."/>
            <person name="Russinova E."/>
            <person name="Inze D."/>
            <person name="de Veylder L."/>
        </authorList>
    </citation>
    <scope>SUBCELLULAR LOCATION</scope>
    <scope>TISSUE SPECIFICITY</scope>
    <scope>INTERACTION WITH PRA1F2 AND PRA1D</scope>
    <scope>GENE FAMILY</scope>
    <scope>NOMENCLATURE</scope>
</reference>
<reference key="6">
    <citation type="journal article" date="2009" name="J. Plant Physiol.">
        <title>Identification of proteins interacting with Arabidopsis ACD11.</title>
        <authorList>
            <person name="Petersen N.H."/>
            <person name="Joensen J."/>
            <person name="McKinney L.V."/>
            <person name="Brodersen P."/>
            <person name="Petersen M."/>
            <person name="Hofius D."/>
            <person name="Mundy J."/>
        </authorList>
    </citation>
    <scope>INTERACTION WITH ACD11 AND BPA1</scope>
    <scope>SUBCELLULAR LOCATION</scope>
    <scope>DISRUPTION PHENOTYPE</scope>
</reference>
<evidence type="ECO:0000250" key="1"/>
<evidence type="ECO:0000255" key="2"/>
<evidence type="ECO:0000269" key="3">
    <source>
    </source>
</evidence>
<evidence type="ECO:0000269" key="4">
    <source>
    </source>
</evidence>
<evidence type="ECO:0000303" key="5">
    <source>
    </source>
</evidence>
<evidence type="ECO:0000303" key="6">
    <source>
    </source>
</evidence>
<evidence type="ECO:0000305" key="7"/>
<evidence type="ECO:0000305" key="8">
    <source>
    </source>
</evidence>
<evidence type="ECO:0000305" key="9">
    <source>
    </source>
</evidence>
<evidence type="ECO:0000312" key="10">
    <source>
        <dbReference type="Araport" id="AT3G13720"/>
    </source>
</evidence>
<evidence type="ECO:0000312" key="11">
    <source>
        <dbReference type="EMBL" id="BAB01921.1"/>
    </source>
</evidence>
<proteinExistence type="evidence at protein level"/>
<gene>
    <name evidence="5" type="primary">PRA1F3</name>
    <name evidence="6" type="synonym">PRA8</name>
    <name evidence="10" type="ordered locus">At3g13720</name>
    <name evidence="11" type="ORF">MMM17.14</name>
</gene>